<gene>
    <name evidence="1" type="primary">rnhB</name>
    <name type="ordered locus">Nwi_2598</name>
</gene>
<comment type="function">
    <text evidence="1">Endonuclease that specifically degrades the RNA of RNA-DNA hybrids.</text>
</comment>
<comment type="catalytic activity">
    <reaction evidence="1">
        <text>Endonucleolytic cleavage to 5'-phosphomonoester.</text>
        <dbReference type="EC" id="3.1.26.4"/>
    </reaction>
</comment>
<comment type="cofactor">
    <cofactor evidence="1">
        <name>Mn(2+)</name>
        <dbReference type="ChEBI" id="CHEBI:29035"/>
    </cofactor>
    <cofactor evidence="1">
        <name>Mg(2+)</name>
        <dbReference type="ChEBI" id="CHEBI:18420"/>
    </cofactor>
    <text evidence="1">Manganese or magnesium. Binds 1 divalent metal ion per monomer in the absence of substrate. May bind a second metal ion after substrate binding.</text>
</comment>
<comment type="subcellular location">
    <subcellularLocation>
        <location evidence="1">Cytoplasm</location>
    </subcellularLocation>
</comment>
<comment type="similarity">
    <text evidence="1">Belongs to the RNase HII family.</text>
</comment>
<organism>
    <name type="scientific">Nitrobacter winogradskyi (strain ATCC 25391 / DSM 10237 / CIP 104748 / NCIMB 11846 / Nb-255)</name>
    <dbReference type="NCBI Taxonomy" id="323098"/>
    <lineage>
        <taxon>Bacteria</taxon>
        <taxon>Pseudomonadati</taxon>
        <taxon>Pseudomonadota</taxon>
        <taxon>Alphaproteobacteria</taxon>
        <taxon>Hyphomicrobiales</taxon>
        <taxon>Nitrobacteraceae</taxon>
        <taxon>Nitrobacter</taxon>
    </lineage>
</organism>
<sequence length="258" mass="27425">MRVAPSGGPPHHHAMIRATPPKRRLKAGTINVAPSFMRERDLMECGVWPVAGCDEVGRGPLAGPVVAAAVVLDPNHIPKGIDDSKRLTAARREELFEEIVATASFAVACAPIERIDRDNILRASLWALARAVHALPDTPKHVFVDGRDRIDIACACEPVIGGDGLVLSIAAASIVAKVTRDRLMCKLARDCPGYGFETHKGYAVPGHLEALGRLGPSSHHRSFFAPVVAARERHRALLAGASASISETSATVAVEAVI</sequence>
<proteinExistence type="inferred from homology"/>
<dbReference type="EC" id="3.1.26.4" evidence="1"/>
<dbReference type="EMBL" id="CP000115">
    <property type="protein sequence ID" value="ABA05851.1"/>
    <property type="molecule type" value="Genomic_DNA"/>
</dbReference>
<dbReference type="SMR" id="Q3SPE0"/>
<dbReference type="STRING" id="323098.Nwi_2598"/>
<dbReference type="KEGG" id="nwi:Nwi_2598"/>
<dbReference type="eggNOG" id="COG0164">
    <property type="taxonomic scope" value="Bacteria"/>
</dbReference>
<dbReference type="HOGENOM" id="CLU_036532_2_2_5"/>
<dbReference type="OrthoDB" id="9803420at2"/>
<dbReference type="Proteomes" id="UP000002531">
    <property type="component" value="Chromosome"/>
</dbReference>
<dbReference type="GO" id="GO:0005737">
    <property type="term" value="C:cytoplasm"/>
    <property type="evidence" value="ECO:0007669"/>
    <property type="project" value="UniProtKB-SubCell"/>
</dbReference>
<dbReference type="GO" id="GO:0032299">
    <property type="term" value="C:ribonuclease H2 complex"/>
    <property type="evidence" value="ECO:0007669"/>
    <property type="project" value="TreeGrafter"/>
</dbReference>
<dbReference type="GO" id="GO:0030145">
    <property type="term" value="F:manganese ion binding"/>
    <property type="evidence" value="ECO:0007669"/>
    <property type="project" value="UniProtKB-UniRule"/>
</dbReference>
<dbReference type="GO" id="GO:0003723">
    <property type="term" value="F:RNA binding"/>
    <property type="evidence" value="ECO:0007669"/>
    <property type="project" value="InterPro"/>
</dbReference>
<dbReference type="GO" id="GO:0004523">
    <property type="term" value="F:RNA-DNA hybrid ribonuclease activity"/>
    <property type="evidence" value="ECO:0007669"/>
    <property type="project" value="UniProtKB-UniRule"/>
</dbReference>
<dbReference type="GO" id="GO:0043137">
    <property type="term" value="P:DNA replication, removal of RNA primer"/>
    <property type="evidence" value="ECO:0007669"/>
    <property type="project" value="TreeGrafter"/>
</dbReference>
<dbReference type="GO" id="GO:0006298">
    <property type="term" value="P:mismatch repair"/>
    <property type="evidence" value="ECO:0007669"/>
    <property type="project" value="TreeGrafter"/>
</dbReference>
<dbReference type="CDD" id="cd07182">
    <property type="entry name" value="RNase_HII_bacteria_HII_like"/>
    <property type="match status" value="1"/>
</dbReference>
<dbReference type="FunFam" id="3.30.420.10:FF:000078">
    <property type="entry name" value="Ribonuclease HII"/>
    <property type="match status" value="1"/>
</dbReference>
<dbReference type="Gene3D" id="3.30.420.10">
    <property type="entry name" value="Ribonuclease H-like superfamily/Ribonuclease H"/>
    <property type="match status" value="1"/>
</dbReference>
<dbReference type="HAMAP" id="MF_00052_B">
    <property type="entry name" value="RNase_HII_B"/>
    <property type="match status" value="1"/>
</dbReference>
<dbReference type="InterPro" id="IPR022898">
    <property type="entry name" value="RNase_HII"/>
</dbReference>
<dbReference type="InterPro" id="IPR001352">
    <property type="entry name" value="RNase_HII/HIII"/>
</dbReference>
<dbReference type="InterPro" id="IPR024567">
    <property type="entry name" value="RNase_HII/HIII_dom"/>
</dbReference>
<dbReference type="InterPro" id="IPR012337">
    <property type="entry name" value="RNaseH-like_sf"/>
</dbReference>
<dbReference type="InterPro" id="IPR036397">
    <property type="entry name" value="RNaseH_sf"/>
</dbReference>
<dbReference type="NCBIfam" id="NF000595">
    <property type="entry name" value="PRK00015.1-3"/>
    <property type="match status" value="1"/>
</dbReference>
<dbReference type="PANTHER" id="PTHR10954">
    <property type="entry name" value="RIBONUCLEASE H2 SUBUNIT A"/>
    <property type="match status" value="1"/>
</dbReference>
<dbReference type="PANTHER" id="PTHR10954:SF18">
    <property type="entry name" value="RIBONUCLEASE HII"/>
    <property type="match status" value="1"/>
</dbReference>
<dbReference type="Pfam" id="PF01351">
    <property type="entry name" value="RNase_HII"/>
    <property type="match status" value="1"/>
</dbReference>
<dbReference type="SUPFAM" id="SSF53098">
    <property type="entry name" value="Ribonuclease H-like"/>
    <property type="match status" value="1"/>
</dbReference>
<dbReference type="PROSITE" id="PS51975">
    <property type="entry name" value="RNASE_H_2"/>
    <property type="match status" value="1"/>
</dbReference>
<reference key="1">
    <citation type="journal article" date="2006" name="Appl. Environ. Microbiol.">
        <title>Genome sequence of the chemolithoautotrophic nitrite-oxidizing bacterium Nitrobacter winogradskyi Nb-255.</title>
        <authorList>
            <person name="Starkenburg S.R."/>
            <person name="Chain P.S.G."/>
            <person name="Sayavedra-Soto L.A."/>
            <person name="Hauser L."/>
            <person name="Land M.L."/>
            <person name="Larimer F.W."/>
            <person name="Malfatti S.A."/>
            <person name="Klotz M.G."/>
            <person name="Bottomley P.J."/>
            <person name="Arp D.J."/>
            <person name="Hickey W.J."/>
        </authorList>
    </citation>
    <scope>NUCLEOTIDE SEQUENCE [LARGE SCALE GENOMIC DNA]</scope>
    <source>
        <strain>ATCC 25391 / DSM 10237 / CIP 104748 / NCIMB 11846 / Nb-255</strain>
    </source>
</reference>
<accession>Q3SPE0</accession>
<name>RNH2_NITWN</name>
<protein>
    <recommendedName>
        <fullName evidence="1">Ribonuclease HII</fullName>
        <shortName evidence="1">RNase HII</shortName>
        <ecNumber evidence="1">3.1.26.4</ecNumber>
    </recommendedName>
</protein>
<evidence type="ECO:0000255" key="1">
    <source>
        <dbReference type="HAMAP-Rule" id="MF_00052"/>
    </source>
</evidence>
<evidence type="ECO:0000255" key="2">
    <source>
        <dbReference type="PROSITE-ProRule" id="PRU01319"/>
    </source>
</evidence>
<evidence type="ECO:0000256" key="3">
    <source>
        <dbReference type="SAM" id="MobiDB-lite"/>
    </source>
</evidence>
<feature type="chain" id="PRO_0000235740" description="Ribonuclease HII">
    <location>
        <begin position="1"/>
        <end position="258"/>
    </location>
</feature>
<feature type="domain" description="RNase H type-2" evidence="2">
    <location>
        <begin position="48"/>
        <end position="236"/>
    </location>
</feature>
<feature type="region of interest" description="Disordered" evidence="3">
    <location>
        <begin position="1"/>
        <end position="20"/>
    </location>
</feature>
<feature type="compositionally biased region" description="Basic residues" evidence="3">
    <location>
        <begin position="10"/>
        <end position="20"/>
    </location>
</feature>
<feature type="binding site" evidence="1">
    <location>
        <position position="54"/>
    </location>
    <ligand>
        <name>a divalent metal cation</name>
        <dbReference type="ChEBI" id="CHEBI:60240"/>
    </ligand>
</feature>
<feature type="binding site" evidence="1">
    <location>
        <position position="55"/>
    </location>
    <ligand>
        <name>a divalent metal cation</name>
        <dbReference type="ChEBI" id="CHEBI:60240"/>
    </ligand>
</feature>
<feature type="binding site" evidence="1">
    <location>
        <position position="145"/>
    </location>
    <ligand>
        <name>a divalent metal cation</name>
        <dbReference type="ChEBI" id="CHEBI:60240"/>
    </ligand>
</feature>
<keyword id="KW-0963">Cytoplasm</keyword>
<keyword id="KW-0255">Endonuclease</keyword>
<keyword id="KW-0378">Hydrolase</keyword>
<keyword id="KW-0464">Manganese</keyword>
<keyword id="KW-0479">Metal-binding</keyword>
<keyword id="KW-0540">Nuclease</keyword>
<keyword id="KW-1185">Reference proteome</keyword>